<gene>
    <name evidence="1" type="primary">rplU</name>
    <name type="ordered locus">CAB192</name>
</gene>
<name>RL21_CHLAB</name>
<feature type="chain" id="PRO_0000270649" description="Large ribosomal subunit protein bL21">
    <location>
        <begin position="1"/>
        <end position="106"/>
    </location>
</feature>
<proteinExistence type="inferred from homology"/>
<dbReference type="EMBL" id="CR848038">
    <property type="protein sequence ID" value="CAH63650.1"/>
    <property type="molecule type" value="Genomic_DNA"/>
</dbReference>
<dbReference type="RefSeq" id="WP_006343859.1">
    <property type="nucleotide sequence ID" value="NC_004552.2"/>
</dbReference>
<dbReference type="SMR" id="Q5L6S1"/>
<dbReference type="GeneID" id="93024750"/>
<dbReference type="KEGG" id="cab:CAB192"/>
<dbReference type="eggNOG" id="COG0261">
    <property type="taxonomic scope" value="Bacteria"/>
</dbReference>
<dbReference type="HOGENOM" id="CLU_061463_3_2_0"/>
<dbReference type="OrthoDB" id="9813334at2"/>
<dbReference type="Proteomes" id="UP000001012">
    <property type="component" value="Chromosome"/>
</dbReference>
<dbReference type="GO" id="GO:0005737">
    <property type="term" value="C:cytoplasm"/>
    <property type="evidence" value="ECO:0007669"/>
    <property type="project" value="UniProtKB-ARBA"/>
</dbReference>
<dbReference type="GO" id="GO:1990904">
    <property type="term" value="C:ribonucleoprotein complex"/>
    <property type="evidence" value="ECO:0007669"/>
    <property type="project" value="UniProtKB-KW"/>
</dbReference>
<dbReference type="GO" id="GO:0005840">
    <property type="term" value="C:ribosome"/>
    <property type="evidence" value="ECO:0007669"/>
    <property type="project" value="UniProtKB-KW"/>
</dbReference>
<dbReference type="GO" id="GO:0019843">
    <property type="term" value="F:rRNA binding"/>
    <property type="evidence" value="ECO:0007669"/>
    <property type="project" value="UniProtKB-UniRule"/>
</dbReference>
<dbReference type="GO" id="GO:0003735">
    <property type="term" value="F:structural constituent of ribosome"/>
    <property type="evidence" value="ECO:0007669"/>
    <property type="project" value="InterPro"/>
</dbReference>
<dbReference type="GO" id="GO:0006412">
    <property type="term" value="P:translation"/>
    <property type="evidence" value="ECO:0007669"/>
    <property type="project" value="UniProtKB-UniRule"/>
</dbReference>
<dbReference type="HAMAP" id="MF_01363">
    <property type="entry name" value="Ribosomal_bL21"/>
    <property type="match status" value="1"/>
</dbReference>
<dbReference type="InterPro" id="IPR028909">
    <property type="entry name" value="bL21-like"/>
</dbReference>
<dbReference type="InterPro" id="IPR036164">
    <property type="entry name" value="bL21-like_sf"/>
</dbReference>
<dbReference type="InterPro" id="IPR001787">
    <property type="entry name" value="Ribosomal_bL21"/>
</dbReference>
<dbReference type="InterPro" id="IPR018258">
    <property type="entry name" value="Ribosomal_bL21_CS"/>
</dbReference>
<dbReference type="NCBIfam" id="TIGR00061">
    <property type="entry name" value="L21"/>
    <property type="match status" value="1"/>
</dbReference>
<dbReference type="PANTHER" id="PTHR21349">
    <property type="entry name" value="50S RIBOSOMAL PROTEIN L21"/>
    <property type="match status" value="1"/>
</dbReference>
<dbReference type="PANTHER" id="PTHR21349:SF0">
    <property type="entry name" value="LARGE RIBOSOMAL SUBUNIT PROTEIN BL21M"/>
    <property type="match status" value="1"/>
</dbReference>
<dbReference type="Pfam" id="PF00829">
    <property type="entry name" value="Ribosomal_L21p"/>
    <property type="match status" value="1"/>
</dbReference>
<dbReference type="SUPFAM" id="SSF141091">
    <property type="entry name" value="L21p-like"/>
    <property type="match status" value="1"/>
</dbReference>
<dbReference type="PROSITE" id="PS01169">
    <property type="entry name" value="RIBOSOMAL_L21"/>
    <property type="match status" value="1"/>
</dbReference>
<reference key="1">
    <citation type="journal article" date="2005" name="Genome Res.">
        <title>The Chlamydophila abortus genome sequence reveals an array of variable proteins that contribute to interspecies variation.</title>
        <authorList>
            <person name="Thomson N.R."/>
            <person name="Yeats C."/>
            <person name="Bell K."/>
            <person name="Holden M.T.G."/>
            <person name="Bentley S.D."/>
            <person name="Livingstone M."/>
            <person name="Cerdeno-Tarraga A.-M."/>
            <person name="Harris B."/>
            <person name="Doggett J."/>
            <person name="Ormond D."/>
            <person name="Mungall K."/>
            <person name="Clarke K."/>
            <person name="Feltwell T."/>
            <person name="Hance Z."/>
            <person name="Sanders M."/>
            <person name="Quail M.A."/>
            <person name="Price C."/>
            <person name="Barrell B.G."/>
            <person name="Parkhill J."/>
            <person name="Longbottom D."/>
        </authorList>
    </citation>
    <scope>NUCLEOTIDE SEQUENCE [LARGE SCALE GENOMIC DNA]</scope>
    <source>
        <strain>DSM 27085 / S26/3</strain>
    </source>
</reference>
<evidence type="ECO:0000255" key="1">
    <source>
        <dbReference type="HAMAP-Rule" id="MF_01363"/>
    </source>
</evidence>
<evidence type="ECO:0000305" key="2"/>
<organism>
    <name type="scientific">Chlamydia abortus (strain DSM 27085 / S26/3)</name>
    <name type="common">Chlamydophila abortus</name>
    <dbReference type="NCBI Taxonomy" id="218497"/>
    <lineage>
        <taxon>Bacteria</taxon>
        <taxon>Pseudomonadati</taxon>
        <taxon>Chlamydiota</taxon>
        <taxon>Chlamydiia</taxon>
        <taxon>Chlamydiales</taxon>
        <taxon>Chlamydiaceae</taxon>
        <taxon>Chlamydia/Chlamydophila group</taxon>
        <taxon>Chlamydia</taxon>
    </lineage>
</organism>
<sequence>MKSYAIIQTGSKQYQVSEGDIIDVELLDGVSEGQEIVFDQVLFTFDGSKVSLGTPTVKNAVVKGELLSRVRGEKVIAYKYKRRKNYHRKIGHRQNYLRVKISNLVM</sequence>
<comment type="function">
    <text evidence="1">This protein binds to 23S rRNA in the presence of protein L20.</text>
</comment>
<comment type="subunit">
    <text evidence="1">Part of the 50S ribosomal subunit. Contacts protein L20.</text>
</comment>
<comment type="similarity">
    <text evidence="1">Belongs to the bacterial ribosomal protein bL21 family.</text>
</comment>
<keyword id="KW-0687">Ribonucleoprotein</keyword>
<keyword id="KW-0689">Ribosomal protein</keyword>
<keyword id="KW-0694">RNA-binding</keyword>
<keyword id="KW-0699">rRNA-binding</keyword>
<protein>
    <recommendedName>
        <fullName evidence="1">Large ribosomal subunit protein bL21</fullName>
    </recommendedName>
    <alternativeName>
        <fullName evidence="2">50S ribosomal protein L21</fullName>
    </alternativeName>
</protein>
<accession>Q5L6S1</accession>